<organism>
    <name type="scientific">Bacillus subtilis (strain 168)</name>
    <dbReference type="NCBI Taxonomy" id="224308"/>
    <lineage>
        <taxon>Bacteria</taxon>
        <taxon>Bacillati</taxon>
        <taxon>Bacillota</taxon>
        <taxon>Bacilli</taxon>
        <taxon>Bacillales</taxon>
        <taxon>Bacillaceae</taxon>
        <taxon>Bacillus</taxon>
    </lineage>
</organism>
<reference key="1">
    <citation type="submission" date="1995-09" db="EMBL/GenBank/DDBJ databases">
        <authorList>
            <person name="Guerout-Fleury A.M."/>
            <person name="Gonzy-Treboul G."/>
            <person name="Stragier P."/>
        </authorList>
    </citation>
    <scope>NUCLEOTIDE SEQUENCE [GENOMIC DNA]</scope>
    <source>
        <strain>168 / JH642</strain>
    </source>
</reference>
<reference key="2">
    <citation type="journal article" date="1996" name="Microbiology">
        <title>Systematic sequencing of the 283 kb 210 degrees-232 degrees region of the Bacillus subtilis genome containing the skin element and many sporulation genes.</title>
        <authorList>
            <person name="Mizuno M."/>
            <person name="Masuda S."/>
            <person name="Takemaru K."/>
            <person name="Hosono S."/>
            <person name="Sato T."/>
            <person name="Takeuchi M."/>
            <person name="Kobayashi Y."/>
        </authorList>
    </citation>
    <scope>NUCLEOTIDE SEQUENCE [GENOMIC DNA]</scope>
    <source>
        <strain>168 / JH642</strain>
    </source>
</reference>
<reference key="3">
    <citation type="journal article" date="1997" name="Nature">
        <title>The complete genome sequence of the Gram-positive bacterium Bacillus subtilis.</title>
        <authorList>
            <person name="Kunst F."/>
            <person name="Ogasawara N."/>
            <person name="Moszer I."/>
            <person name="Albertini A.M."/>
            <person name="Alloni G."/>
            <person name="Azevedo V."/>
            <person name="Bertero M.G."/>
            <person name="Bessieres P."/>
            <person name="Bolotin A."/>
            <person name="Borchert S."/>
            <person name="Borriss R."/>
            <person name="Boursier L."/>
            <person name="Brans A."/>
            <person name="Braun M."/>
            <person name="Brignell S.C."/>
            <person name="Bron S."/>
            <person name="Brouillet S."/>
            <person name="Bruschi C.V."/>
            <person name="Caldwell B."/>
            <person name="Capuano V."/>
            <person name="Carter N.M."/>
            <person name="Choi S.-K."/>
            <person name="Codani J.-J."/>
            <person name="Connerton I.F."/>
            <person name="Cummings N.J."/>
            <person name="Daniel R.A."/>
            <person name="Denizot F."/>
            <person name="Devine K.M."/>
            <person name="Duesterhoeft A."/>
            <person name="Ehrlich S.D."/>
            <person name="Emmerson P.T."/>
            <person name="Entian K.-D."/>
            <person name="Errington J."/>
            <person name="Fabret C."/>
            <person name="Ferrari E."/>
            <person name="Foulger D."/>
            <person name="Fritz C."/>
            <person name="Fujita M."/>
            <person name="Fujita Y."/>
            <person name="Fuma S."/>
            <person name="Galizzi A."/>
            <person name="Galleron N."/>
            <person name="Ghim S.-Y."/>
            <person name="Glaser P."/>
            <person name="Goffeau A."/>
            <person name="Golightly E.J."/>
            <person name="Grandi G."/>
            <person name="Guiseppi G."/>
            <person name="Guy B.J."/>
            <person name="Haga K."/>
            <person name="Haiech J."/>
            <person name="Harwood C.R."/>
            <person name="Henaut A."/>
            <person name="Hilbert H."/>
            <person name="Holsappel S."/>
            <person name="Hosono S."/>
            <person name="Hullo M.-F."/>
            <person name="Itaya M."/>
            <person name="Jones L.-M."/>
            <person name="Joris B."/>
            <person name="Karamata D."/>
            <person name="Kasahara Y."/>
            <person name="Klaerr-Blanchard M."/>
            <person name="Klein C."/>
            <person name="Kobayashi Y."/>
            <person name="Koetter P."/>
            <person name="Koningstein G."/>
            <person name="Krogh S."/>
            <person name="Kumano M."/>
            <person name="Kurita K."/>
            <person name="Lapidus A."/>
            <person name="Lardinois S."/>
            <person name="Lauber J."/>
            <person name="Lazarevic V."/>
            <person name="Lee S.-M."/>
            <person name="Levine A."/>
            <person name="Liu H."/>
            <person name="Masuda S."/>
            <person name="Mauel C."/>
            <person name="Medigue C."/>
            <person name="Medina N."/>
            <person name="Mellado R.P."/>
            <person name="Mizuno M."/>
            <person name="Moestl D."/>
            <person name="Nakai S."/>
            <person name="Noback M."/>
            <person name="Noone D."/>
            <person name="O'Reilly M."/>
            <person name="Ogawa K."/>
            <person name="Ogiwara A."/>
            <person name="Oudega B."/>
            <person name="Park S.-H."/>
            <person name="Parro V."/>
            <person name="Pohl T.M."/>
            <person name="Portetelle D."/>
            <person name="Porwollik S."/>
            <person name="Prescott A.M."/>
            <person name="Presecan E."/>
            <person name="Pujic P."/>
            <person name="Purnelle B."/>
            <person name="Rapoport G."/>
            <person name="Rey M."/>
            <person name="Reynolds S."/>
            <person name="Rieger M."/>
            <person name="Rivolta C."/>
            <person name="Rocha E."/>
            <person name="Roche B."/>
            <person name="Rose M."/>
            <person name="Sadaie Y."/>
            <person name="Sato T."/>
            <person name="Scanlan E."/>
            <person name="Schleich S."/>
            <person name="Schroeter R."/>
            <person name="Scoffone F."/>
            <person name="Sekiguchi J."/>
            <person name="Sekowska A."/>
            <person name="Seror S.J."/>
            <person name="Serror P."/>
            <person name="Shin B.-S."/>
            <person name="Soldo B."/>
            <person name="Sorokin A."/>
            <person name="Tacconi E."/>
            <person name="Takagi T."/>
            <person name="Takahashi H."/>
            <person name="Takemaru K."/>
            <person name="Takeuchi M."/>
            <person name="Tamakoshi A."/>
            <person name="Tanaka T."/>
            <person name="Terpstra P."/>
            <person name="Tognoni A."/>
            <person name="Tosato V."/>
            <person name="Uchiyama S."/>
            <person name="Vandenbol M."/>
            <person name="Vannier F."/>
            <person name="Vassarotti A."/>
            <person name="Viari A."/>
            <person name="Wambutt R."/>
            <person name="Wedler E."/>
            <person name="Wedler H."/>
            <person name="Weitzenegger T."/>
            <person name="Winters P."/>
            <person name="Wipat A."/>
            <person name="Yamamoto H."/>
            <person name="Yamane K."/>
            <person name="Yasumoto K."/>
            <person name="Yata K."/>
            <person name="Yoshida K."/>
            <person name="Yoshikawa H.-F."/>
            <person name="Zumstein E."/>
            <person name="Yoshikawa H."/>
            <person name="Danchin A."/>
        </authorList>
    </citation>
    <scope>NUCLEOTIDE SEQUENCE [LARGE SCALE GENOMIC DNA]</scope>
    <source>
        <strain>168</strain>
    </source>
</reference>
<keyword id="KW-1003">Cell membrane</keyword>
<keyword id="KW-0472">Membrane</keyword>
<keyword id="KW-1185">Reference proteome</keyword>
<keyword id="KW-0749">Sporulation</keyword>
<keyword id="KW-0812">Transmembrane</keyword>
<keyword id="KW-1133">Transmembrane helix</keyword>
<dbReference type="EMBL" id="U35252">
    <property type="protein sequence ID" value="AAA76722.1"/>
    <property type="molecule type" value="Genomic_DNA"/>
</dbReference>
<dbReference type="EMBL" id="D84432">
    <property type="protein sequence ID" value="BAA12562.1"/>
    <property type="molecule type" value="Genomic_DNA"/>
</dbReference>
<dbReference type="EMBL" id="AL009126">
    <property type="protein sequence ID" value="CAB14372.1"/>
    <property type="molecule type" value="Genomic_DNA"/>
</dbReference>
<dbReference type="PIR" id="F69711">
    <property type="entry name" value="F69711"/>
</dbReference>
<dbReference type="RefSeq" id="NP_390321.1">
    <property type="nucleotide sequence ID" value="NC_000964.3"/>
</dbReference>
<dbReference type="RefSeq" id="WP_003153142.1">
    <property type="nucleotide sequence ID" value="NZ_OZ025638.1"/>
</dbReference>
<dbReference type="SMR" id="P49780"/>
<dbReference type="FunCoup" id="P49780">
    <property type="interactions" value="91"/>
</dbReference>
<dbReference type="STRING" id="224308.BSU24410"/>
<dbReference type="TCDB" id="9.B.70.1.1">
    <property type="family name" value="the multicomponent putative spoiiiae exporter (spoiiia-e) family"/>
</dbReference>
<dbReference type="PaxDb" id="224308-BSU24410"/>
<dbReference type="EnsemblBacteria" id="CAB14372">
    <property type="protein sequence ID" value="CAB14372"/>
    <property type="gene ID" value="BSU_24410"/>
</dbReference>
<dbReference type="GeneID" id="93081412"/>
<dbReference type="GeneID" id="938562"/>
<dbReference type="KEGG" id="bsu:BSU24410"/>
<dbReference type="PATRIC" id="fig|224308.179.peg.2659"/>
<dbReference type="eggNOG" id="ENOG5032ZY3">
    <property type="taxonomic scope" value="Bacteria"/>
</dbReference>
<dbReference type="InParanoid" id="P49780"/>
<dbReference type="OrthoDB" id="9800383at2"/>
<dbReference type="PhylomeDB" id="P49780"/>
<dbReference type="BioCyc" id="BSUB:BSU24410-MONOMER"/>
<dbReference type="PRO" id="PR:P49780"/>
<dbReference type="Proteomes" id="UP000001570">
    <property type="component" value="Chromosome"/>
</dbReference>
<dbReference type="GO" id="GO:0005886">
    <property type="term" value="C:plasma membrane"/>
    <property type="evidence" value="ECO:0007669"/>
    <property type="project" value="UniProtKB-SubCell"/>
</dbReference>
<dbReference type="GO" id="GO:0030435">
    <property type="term" value="P:sporulation resulting in formation of a cellular spore"/>
    <property type="evidence" value="ECO:0007669"/>
    <property type="project" value="UniProtKB-KW"/>
</dbReference>
<dbReference type="InterPro" id="IPR009570">
    <property type="entry name" value="Spore_III_AC"/>
</dbReference>
<dbReference type="InterPro" id="IPR025664">
    <property type="entry name" value="Spore_III_AC/AD"/>
</dbReference>
<dbReference type="NCBIfam" id="TIGR02848">
    <property type="entry name" value="spore_III_AC"/>
    <property type="match status" value="1"/>
</dbReference>
<dbReference type="Pfam" id="PF06686">
    <property type="entry name" value="SpoIIIAC"/>
    <property type="match status" value="1"/>
</dbReference>
<comment type="subcellular location">
    <subcellularLocation>
        <location evidence="2">Cell membrane</location>
        <topology evidence="2">Multi-pass membrane protein</topology>
    </subcellularLocation>
</comment>
<feature type="chain" id="PRO_0000072067" description="Stage III sporulation protein AC">
    <location>
        <begin position="1"/>
        <end position="68"/>
    </location>
</feature>
<feature type="transmembrane region" description="Helical" evidence="1">
    <location>
        <begin position="5"/>
        <end position="25"/>
    </location>
</feature>
<feature type="transmembrane region" description="Helical" evidence="1">
    <location>
        <begin position="33"/>
        <end position="53"/>
    </location>
</feature>
<accession>P49780</accession>
<gene>
    <name type="primary">spoIIIAC</name>
    <name type="ordered locus">BSU24410</name>
</gene>
<protein>
    <recommendedName>
        <fullName>Stage III sporulation protein AC</fullName>
    </recommendedName>
</protein>
<proteinExistence type="predicted"/>
<name>SP3AC_BACSU</name>
<sequence>MGVDVNVIFQIAGVGIVVAFLHTILDQMGKKEYAQWVTLLGFIYILFMVATIVDDLFKKIKAVFLFQG</sequence>
<evidence type="ECO:0000255" key="1"/>
<evidence type="ECO:0000305" key="2"/>